<comment type="function">
    <text evidence="1">Catalyzes the synthesis of the hydroxymethylpyrimidine phosphate (HMP-P) moiety of thiamine from aminoimidazole ribotide (AIR) in a radical S-adenosyl-L-methionine (SAM)-dependent reaction.</text>
</comment>
<comment type="catalytic activity">
    <reaction evidence="1">
        <text>5-amino-1-(5-phospho-beta-D-ribosyl)imidazole + S-adenosyl-L-methionine = 4-amino-2-methyl-5-(phosphooxymethyl)pyrimidine + CO + 5'-deoxyadenosine + formate + L-methionine + 3 H(+)</text>
        <dbReference type="Rhea" id="RHEA:24840"/>
        <dbReference type="ChEBI" id="CHEBI:15378"/>
        <dbReference type="ChEBI" id="CHEBI:15740"/>
        <dbReference type="ChEBI" id="CHEBI:17245"/>
        <dbReference type="ChEBI" id="CHEBI:17319"/>
        <dbReference type="ChEBI" id="CHEBI:57844"/>
        <dbReference type="ChEBI" id="CHEBI:58354"/>
        <dbReference type="ChEBI" id="CHEBI:59789"/>
        <dbReference type="ChEBI" id="CHEBI:137981"/>
        <dbReference type="EC" id="4.1.99.17"/>
    </reaction>
</comment>
<comment type="cofactor">
    <cofactor evidence="1">
        <name>[4Fe-4S] cluster</name>
        <dbReference type="ChEBI" id="CHEBI:49883"/>
    </cofactor>
    <text evidence="1">Binds 1 [4Fe-4S] cluster per subunit. The cluster is coordinated with 3 cysteines and an exchangeable S-adenosyl-L-methionine.</text>
</comment>
<comment type="pathway">
    <text evidence="1">Cofactor biosynthesis; thiamine diphosphate biosynthesis.</text>
</comment>
<comment type="subunit">
    <text evidence="1">Homodimer.</text>
</comment>
<comment type="similarity">
    <text evidence="1">Belongs to the ThiC family.</text>
</comment>
<protein>
    <recommendedName>
        <fullName evidence="1">Phosphomethylpyrimidine synthase</fullName>
        <ecNumber evidence="1">4.1.99.17</ecNumber>
    </recommendedName>
    <alternativeName>
        <fullName evidence="1">Hydroxymethylpyrimidine phosphate synthase</fullName>
        <shortName evidence="1">HMP-P synthase</shortName>
        <shortName evidence="1">HMP-phosphate synthase</shortName>
        <shortName evidence="1">HMPP synthase</shortName>
    </alternativeName>
    <alternativeName>
        <fullName evidence="1">Thiamine biosynthesis protein ThiC</fullName>
    </alternativeName>
</protein>
<accession>B7UPE9</accession>
<organism>
    <name type="scientific">Escherichia coli O127:H6 (strain E2348/69 / EPEC)</name>
    <dbReference type="NCBI Taxonomy" id="574521"/>
    <lineage>
        <taxon>Bacteria</taxon>
        <taxon>Pseudomonadati</taxon>
        <taxon>Pseudomonadota</taxon>
        <taxon>Gammaproteobacteria</taxon>
        <taxon>Enterobacterales</taxon>
        <taxon>Enterobacteriaceae</taxon>
        <taxon>Escherichia</taxon>
    </lineage>
</organism>
<reference key="1">
    <citation type="journal article" date="2009" name="J. Bacteriol.">
        <title>Complete genome sequence and comparative genome analysis of enteropathogenic Escherichia coli O127:H6 strain E2348/69.</title>
        <authorList>
            <person name="Iguchi A."/>
            <person name="Thomson N.R."/>
            <person name="Ogura Y."/>
            <person name="Saunders D."/>
            <person name="Ooka T."/>
            <person name="Henderson I.R."/>
            <person name="Harris D."/>
            <person name="Asadulghani M."/>
            <person name="Kurokawa K."/>
            <person name="Dean P."/>
            <person name="Kenny B."/>
            <person name="Quail M.A."/>
            <person name="Thurston S."/>
            <person name="Dougan G."/>
            <person name="Hayashi T."/>
            <person name="Parkhill J."/>
            <person name="Frankel G."/>
        </authorList>
    </citation>
    <scope>NUCLEOTIDE SEQUENCE [LARGE SCALE GENOMIC DNA]</scope>
    <source>
        <strain>E2348/69 / EPEC</strain>
    </source>
</reference>
<evidence type="ECO:0000255" key="1">
    <source>
        <dbReference type="HAMAP-Rule" id="MF_00089"/>
    </source>
</evidence>
<gene>
    <name evidence="1" type="primary">thiC</name>
    <name type="ordered locus">E2348C_4301</name>
</gene>
<feature type="chain" id="PRO_1000118509" description="Phosphomethylpyrimidine synthase">
    <location>
        <begin position="1"/>
        <end position="631"/>
    </location>
</feature>
<feature type="binding site" evidence="1">
    <location>
        <position position="239"/>
    </location>
    <ligand>
        <name>substrate</name>
    </ligand>
</feature>
<feature type="binding site" evidence="1">
    <location>
        <position position="268"/>
    </location>
    <ligand>
        <name>substrate</name>
    </ligand>
</feature>
<feature type="binding site" evidence="1">
    <location>
        <position position="297"/>
    </location>
    <ligand>
        <name>substrate</name>
    </ligand>
</feature>
<feature type="binding site" evidence="1">
    <location>
        <position position="333"/>
    </location>
    <ligand>
        <name>substrate</name>
    </ligand>
</feature>
<feature type="binding site" evidence="1">
    <location>
        <begin position="353"/>
        <end position="355"/>
    </location>
    <ligand>
        <name>substrate</name>
    </ligand>
</feature>
<feature type="binding site" evidence="1">
    <location>
        <begin position="394"/>
        <end position="397"/>
    </location>
    <ligand>
        <name>substrate</name>
    </ligand>
</feature>
<feature type="binding site" evidence="1">
    <location>
        <position position="433"/>
    </location>
    <ligand>
        <name>substrate</name>
    </ligand>
</feature>
<feature type="binding site" evidence="1">
    <location>
        <position position="437"/>
    </location>
    <ligand>
        <name>Zn(2+)</name>
        <dbReference type="ChEBI" id="CHEBI:29105"/>
    </ligand>
</feature>
<feature type="binding site" evidence="1">
    <location>
        <position position="460"/>
    </location>
    <ligand>
        <name>substrate</name>
    </ligand>
</feature>
<feature type="binding site" evidence="1">
    <location>
        <position position="501"/>
    </location>
    <ligand>
        <name>Zn(2+)</name>
        <dbReference type="ChEBI" id="CHEBI:29105"/>
    </ligand>
</feature>
<feature type="binding site" evidence="1">
    <location>
        <position position="581"/>
    </location>
    <ligand>
        <name>[4Fe-4S] cluster</name>
        <dbReference type="ChEBI" id="CHEBI:49883"/>
        <note>4Fe-4S-S-AdoMet</note>
    </ligand>
</feature>
<feature type="binding site" evidence="1">
    <location>
        <position position="584"/>
    </location>
    <ligand>
        <name>[4Fe-4S] cluster</name>
        <dbReference type="ChEBI" id="CHEBI:49883"/>
        <note>4Fe-4S-S-AdoMet</note>
    </ligand>
</feature>
<feature type="binding site" evidence="1">
    <location>
        <position position="589"/>
    </location>
    <ligand>
        <name>[4Fe-4S] cluster</name>
        <dbReference type="ChEBI" id="CHEBI:49883"/>
        <note>4Fe-4S-S-AdoMet</note>
    </ligand>
</feature>
<proteinExistence type="inferred from homology"/>
<name>THIC_ECO27</name>
<dbReference type="EC" id="4.1.99.17" evidence="1"/>
<dbReference type="EMBL" id="FM180568">
    <property type="protein sequence ID" value="CAS11849.1"/>
    <property type="molecule type" value="Genomic_DNA"/>
</dbReference>
<dbReference type="RefSeq" id="WP_001276888.1">
    <property type="nucleotide sequence ID" value="NC_011601.1"/>
</dbReference>
<dbReference type="SMR" id="B7UPE9"/>
<dbReference type="KEGG" id="ecg:E2348C_4301"/>
<dbReference type="HOGENOM" id="CLU_013181_2_1_6"/>
<dbReference type="UniPathway" id="UPA00060"/>
<dbReference type="Proteomes" id="UP000008205">
    <property type="component" value="Chromosome"/>
</dbReference>
<dbReference type="GO" id="GO:0005829">
    <property type="term" value="C:cytosol"/>
    <property type="evidence" value="ECO:0007669"/>
    <property type="project" value="TreeGrafter"/>
</dbReference>
<dbReference type="GO" id="GO:0051539">
    <property type="term" value="F:4 iron, 4 sulfur cluster binding"/>
    <property type="evidence" value="ECO:0007669"/>
    <property type="project" value="UniProtKB-KW"/>
</dbReference>
<dbReference type="GO" id="GO:0016830">
    <property type="term" value="F:carbon-carbon lyase activity"/>
    <property type="evidence" value="ECO:0007669"/>
    <property type="project" value="InterPro"/>
</dbReference>
<dbReference type="GO" id="GO:0008270">
    <property type="term" value="F:zinc ion binding"/>
    <property type="evidence" value="ECO:0007669"/>
    <property type="project" value="UniProtKB-UniRule"/>
</dbReference>
<dbReference type="GO" id="GO:0009228">
    <property type="term" value="P:thiamine biosynthetic process"/>
    <property type="evidence" value="ECO:0007669"/>
    <property type="project" value="UniProtKB-KW"/>
</dbReference>
<dbReference type="GO" id="GO:0009229">
    <property type="term" value="P:thiamine diphosphate biosynthetic process"/>
    <property type="evidence" value="ECO:0007669"/>
    <property type="project" value="UniProtKB-UniRule"/>
</dbReference>
<dbReference type="FunFam" id="3.20.20.540:FF:000001">
    <property type="entry name" value="Phosphomethylpyrimidine synthase"/>
    <property type="match status" value="1"/>
</dbReference>
<dbReference type="Gene3D" id="6.10.250.620">
    <property type="match status" value="1"/>
</dbReference>
<dbReference type="Gene3D" id="3.20.20.540">
    <property type="entry name" value="Radical SAM ThiC family, central domain"/>
    <property type="match status" value="1"/>
</dbReference>
<dbReference type="HAMAP" id="MF_00089">
    <property type="entry name" value="ThiC"/>
    <property type="match status" value="1"/>
</dbReference>
<dbReference type="InterPro" id="IPR037509">
    <property type="entry name" value="ThiC"/>
</dbReference>
<dbReference type="InterPro" id="IPR025747">
    <property type="entry name" value="ThiC-associated_dom"/>
</dbReference>
<dbReference type="InterPro" id="IPR038521">
    <property type="entry name" value="ThiC/Bza_core_dom"/>
</dbReference>
<dbReference type="InterPro" id="IPR002817">
    <property type="entry name" value="ThiC/BzaA/B"/>
</dbReference>
<dbReference type="NCBIfam" id="NF006763">
    <property type="entry name" value="PRK09284.1"/>
    <property type="match status" value="1"/>
</dbReference>
<dbReference type="NCBIfam" id="NF009895">
    <property type="entry name" value="PRK13352.1"/>
    <property type="match status" value="1"/>
</dbReference>
<dbReference type="NCBIfam" id="TIGR00190">
    <property type="entry name" value="thiC"/>
    <property type="match status" value="1"/>
</dbReference>
<dbReference type="PANTHER" id="PTHR30557:SF1">
    <property type="entry name" value="PHOSPHOMETHYLPYRIMIDINE SYNTHASE, CHLOROPLASTIC"/>
    <property type="match status" value="1"/>
</dbReference>
<dbReference type="PANTHER" id="PTHR30557">
    <property type="entry name" value="THIAMINE BIOSYNTHESIS PROTEIN THIC"/>
    <property type="match status" value="1"/>
</dbReference>
<dbReference type="Pfam" id="PF13667">
    <property type="entry name" value="ThiC-associated"/>
    <property type="match status" value="1"/>
</dbReference>
<dbReference type="Pfam" id="PF01964">
    <property type="entry name" value="ThiC_Rad_SAM"/>
    <property type="match status" value="1"/>
</dbReference>
<dbReference type="SFLD" id="SFLDF00407">
    <property type="entry name" value="phosphomethylpyrimidine_syntha"/>
    <property type="match status" value="1"/>
</dbReference>
<dbReference type="SFLD" id="SFLDG01114">
    <property type="entry name" value="phosphomethylpyrimidine_syntha"/>
    <property type="match status" value="1"/>
</dbReference>
<dbReference type="SFLD" id="SFLDS00113">
    <property type="entry name" value="Radical_SAM_Phosphomethylpyrim"/>
    <property type="match status" value="1"/>
</dbReference>
<sequence length="631" mass="70756">MSATKLTRREQRAQAQHFIDTLEGSAFPNSKRIYITGTQPGVRVPMREIQLSPTLIGGSKEQPQYEENEAIPVYDTSGPYGDPQIAINVQQGLAKLRQPWIDARGDTEELTVRSSDYTKARLADDGLDELRFSGVLTPKRAKAGRRVTQLHYARKGIITPEMEFIAIRENMGRERIRSEVLRHQHPGMSFGARLPENITAEFVRDEVAAGRAIIPANINHPESEPMIIGRNFLVKVNANIGNSAVTSSIEEEVEKLVWSTRWGADTVMDLSTGRYIHETREWILRNSPVPIGTVPIYQALEKVNGIAEDLTWEAFRDTLLEQAEQGVDYFTIHAGVLLRYVPMTAKRLTGIVSRGGSIMAKWCLSHHQENFLYQHFREICEICAAYDVSLSLGDGLRPGSIQDANDEAQFAELHTLGELTKIAWEYDVQVMIEGPGHVPMQMIRRNMTEELEHCHEAPFYTLGPLTTDIAPGYDHFTSGIGAAMIGWFGCAMLCYVTPKEHLGLPNKEDVKQGLITYKIAAHAADLAKGHPGAQIRDNAMSKARFEFRWEDQFNLALDPFTARAYHDETLPQESGKVAHFCSMCGPKFCSMKISQEVRDYAAAQTIEVGMADMSENFRARGGEIYLRKEEA</sequence>
<keyword id="KW-0004">4Fe-4S</keyword>
<keyword id="KW-0408">Iron</keyword>
<keyword id="KW-0411">Iron-sulfur</keyword>
<keyword id="KW-0456">Lyase</keyword>
<keyword id="KW-0479">Metal-binding</keyword>
<keyword id="KW-1185">Reference proteome</keyword>
<keyword id="KW-0949">S-adenosyl-L-methionine</keyword>
<keyword id="KW-0784">Thiamine biosynthesis</keyword>
<keyword id="KW-0862">Zinc</keyword>